<name>HTPX_STRPM</name>
<reference key="1">
    <citation type="journal article" date="2005" name="J. Infect. Dis.">
        <title>Genome sequence of a serotype M28 strain of group A Streptococcus: potential new insights into puerperal sepsis and bacterial disease specificity.</title>
        <authorList>
            <person name="Green N.M."/>
            <person name="Zhang S."/>
            <person name="Porcella S.F."/>
            <person name="Nagiec M.J."/>
            <person name="Barbian K.D."/>
            <person name="Beres S.B."/>
            <person name="Lefebvre R.B."/>
            <person name="Musser J.M."/>
        </authorList>
    </citation>
    <scope>NUCLEOTIDE SEQUENCE [LARGE SCALE GENOMIC DNA]</scope>
    <source>
        <strain>MGAS6180</strain>
    </source>
</reference>
<dbReference type="EC" id="3.4.24.-" evidence="1"/>
<dbReference type="EMBL" id="CP000056">
    <property type="protein sequence ID" value="AAX71386.1"/>
    <property type="molecule type" value="Genomic_DNA"/>
</dbReference>
<dbReference type="RefSeq" id="WP_011284515.1">
    <property type="nucleotide sequence ID" value="NC_007296.2"/>
</dbReference>
<dbReference type="SMR" id="Q48V70"/>
<dbReference type="KEGG" id="spb:M28_Spy0272"/>
<dbReference type="HOGENOM" id="CLU_042266_2_1_9"/>
<dbReference type="GO" id="GO:0005886">
    <property type="term" value="C:plasma membrane"/>
    <property type="evidence" value="ECO:0007669"/>
    <property type="project" value="UniProtKB-SubCell"/>
</dbReference>
<dbReference type="GO" id="GO:0004222">
    <property type="term" value="F:metalloendopeptidase activity"/>
    <property type="evidence" value="ECO:0007669"/>
    <property type="project" value="UniProtKB-UniRule"/>
</dbReference>
<dbReference type="GO" id="GO:0008270">
    <property type="term" value="F:zinc ion binding"/>
    <property type="evidence" value="ECO:0007669"/>
    <property type="project" value="UniProtKB-UniRule"/>
</dbReference>
<dbReference type="GO" id="GO:0006508">
    <property type="term" value="P:proteolysis"/>
    <property type="evidence" value="ECO:0007669"/>
    <property type="project" value="UniProtKB-KW"/>
</dbReference>
<dbReference type="CDD" id="cd07340">
    <property type="entry name" value="M48B_Htpx_like"/>
    <property type="match status" value="1"/>
</dbReference>
<dbReference type="Gene3D" id="3.30.2010.10">
    <property type="entry name" value="Metalloproteases ('zincins'), catalytic domain"/>
    <property type="match status" value="1"/>
</dbReference>
<dbReference type="HAMAP" id="MF_00188">
    <property type="entry name" value="Pept_M48_protease_HtpX"/>
    <property type="match status" value="1"/>
</dbReference>
<dbReference type="InterPro" id="IPR050083">
    <property type="entry name" value="HtpX_protease"/>
</dbReference>
<dbReference type="InterPro" id="IPR022919">
    <property type="entry name" value="Pept_M48_protease_HtpX"/>
</dbReference>
<dbReference type="InterPro" id="IPR001915">
    <property type="entry name" value="Peptidase_M48"/>
</dbReference>
<dbReference type="NCBIfam" id="NF003425">
    <property type="entry name" value="PRK04897.1"/>
    <property type="match status" value="1"/>
</dbReference>
<dbReference type="PANTHER" id="PTHR43221">
    <property type="entry name" value="PROTEASE HTPX"/>
    <property type="match status" value="1"/>
</dbReference>
<dbReference type="PANTHER" id="PTHR43221:SF1">
    <property type="entry name" value="PROTEASE HTPX"/>
    <property type="match status" value="1"/>
</dbReference>
<dbReference type="Pfam" id="PF01435">
    <property type="entry name" value="Peptidase_M48"/>
    <property type="match status" value="1"/>
</dbReference>
<protein>
    <recommendedName>
        <fullName evidence="1">Protease HtpX homolog</fullName>
        <ecNumber evidence="1">3.4.24.-</ecNumber>
    </recommendedName>
</protein>
<evidence type="ECO:0000255" key="1">
    <source>
        <dbReference type="HAMAP-Rule" id="MF_00188"/>
    </source>
</evidence>
<gene>
    <name evidence="1" type="primary">htpX</name>
    <name type="ordered locus">M28_Spy0272</name>
</gene>
<sequence length="298" mass="32743">MLYQQISQNKQRTVVLLVVFFALLALIGASAGYLLLDNYAMGLVLALVIGVIYATSMIFQSTSLVMSMNNAREVTEKEAPGFFHIVEDMAMVAQIPMPRVFIIEDPSLNAFATGSSPQNAAVAATTGLLEVMNREELEGVIGHEISHIRNYDIRISTIAVALASAVTVISSIGGRMLWYGGGSRRQRDDGDDDVLRIITLLLSLLSLLLAPLVASLIQLAISRQREYLADASSVELTRNPQGMINALEKLQLSQPMKHPVDDASAALYINEPRKKRSFSSLFSTHPPIEERIERLKNM</sequence>
<keyword id="KW-1003">Cell membrane</keyword>
<keyword id="KW-0378">Hydrolase</keyword>
<keyword id="KW-0472">Membrane</keyword>
<keyword id="KW-0479">Metal-binding</keyword>
<keyword id="KW-0482">Metalloprotease</keyword>
<keyword id="KW-0645">Protease</keyword>
<keyword id="KW-0812">Transmembrane</keyword>
<keyword id="KW-1133">Transmembrane helix</keyword>
<keyword id="KW-0862">Zinc</keyword>
<organism>
    <name type="scientific">Streptococcus pyogenes serotype M28 (strain MGAS6180)</name>
    <dbReference type="NCBI Taxonomy" id="319701"/>
    <lineage>
        <taxon>Bacteria</taxon>
        <taxon>Bacillati</taxon>
        <taxon>Bacillota</taxon>
        <taxon>Bacilli</taxon>
        <taxon>Lactobacillales</taxon>
        <taxon>Streptococcaceae</taxon>
        <taxon>Streptococcus</taxon>
    </lineage>
</organism>
<feature type="chain" id="PRO_1000020955" description="Protease HtpX homolog">
    <location>
        <begin position="1"/>
        <end position="298"/>
    </location>
</feature>
<feature type="transmembrane region" description="Helical" evidence="1">
    <location>
        <begin position="14"/>
        <end position="34"/>
    </location>
</feature>
<feature type="transmembrane region" description="Helical" evidence="1">
    <location>
        <begin position="39"/>
        <end position="59"/>
    </location>
</feature>
<feature type="transmembrane region" description="Helical" evidence="1">
    <location>
        <begin position="158"/>
        <end position="178"/>
    </location>
</feature>
<feature type="transmembrane region" description="Helical" evidence="1">
    <location>
        <begin position="197"/>
        <end position="217"/>
    </location>
</feature>
<feature type="active site" evidence="1">
    <location>
        <position position="144"/>
    </location>
</feature>
<feature type="binding site" evidence="1">
    <location>
        <position position="143"/>
    </location>
    <ligand>
        <name>Zn(2+)</name>
        <dbReference type="ChEBI" id="CHEBI:29105"/>
        <note>catalytic</note>
    </ligand>
</feature>
<feature type="binding site" evidence="1">
    <location>
        <position position="147"/>
    </location>
    <ligand>
        <name>Zn(2+)</name>
        <dbReference type="ChEBI" id="CHEBI:29105"/>
        <note>catalytic</note>
    </ligand>
</feature>
<feature type="binding site" evidence="1">
    <location>
        <position position="226"/>
    </location>
    <ligand>
        <name>Zn(2+)</name>
        <dbReference type="ChEBI" id="CHEBI:29105"/>
        <note>catalytic</note>
    </ligand>
</feature>
<accession>Q48V70</accession>
<proteinExistence type="inferred from homology"/>
<comment type="cofactor">
    <cofactor evidence="1">
        <name>Zn(2+)</name>
        <dbReference type="ChEBI" id="CHEBI:29105"/>
    </cofactor>
    <text evidence="1">Binds 1 zinc ion per subunit.</text>
</comment>
<comment type="subcellular location">
    <subcellularLocation>
        <location evidence="1">Cell membrane</location>
        <topology evidence="1">Multi-pass membrane protein</topology>
    </subcellularLocation>
</comment>
<comment type="similarity">
    <text evidence="1">Belongs to the peptidase M48B family.</text>
</comment>